<keyword id="KW-0067">ATP-binding</keyword>
<keyword id="KW-0460">Magnesium</keyword>
<keyword id="KW-0547">Nucleotide-binding</keyword>
<keyword id="KW-0808">Transferase</keyword>
<keyword id="KW-0819">tRNA processing</keyword>
<protein>
    <recommendedName>
        <fullName evidence="1">tRNA dimethylallyltransferase</fullName>
        <ecNumber evidence="1">2.5.1.75</ecNumber>
    </recommendedName>
    <alternativeName>
        <fullName evidence="1">Dimethylallyl diphosphate:tRNA dimethylallyltransferase</fullName>
        <shortName evidence="1">DMAPP:tRNA dimethylallyltransferase</shortName>
        <shortName evidence="1">DMATase</shortName>
    </alternativeName>
    <alternativeName>
        <fullName evidence="1">Isopentenyl-diphosphate:tRNA isopentenyltransferase</fullName>
        <shortName evidence="1">IPP transferase</shortName>
        <shortName evidence="1">IPPT</shortName>
        <shortName evidence="1">IPTase</shortName>
    </alternativeName>
</protein>
<name>MIAA_CHLP8</name>
<accession>B3QNZ0</accession>
<gene>
    <name evidence="1" type="primary">miaA</name>
    <name type="ordered locus">Cpar_1238</name>
</gene>
<reference key="1">
    <citation type="submission" date="2008-06" db="EMBL/GenBank/DDBJ databases">
        <title>Complete sequence of Chlorobaculum parvum NCIB 8327.</title>
        <authorList>
            <consortium name="US DOE Joint Genome Institute"/>
            <person name="Lucas S."/>
            <person name="Copeland A."/>
            <person name="Lapidus A."/>
            <person name="Glavina del Rio T."/>
            <person name="Dalin E."/>
            <person name="Tice H."/>
            <person name="Bruce D."/>
            <person name="Goodwin L."/>
            <person name="Pitluck S."/>
            <person name="Schmutz J."/>
            <person name="Larimer F."/>
            <person name="Land M."/>
            <person name="Hauser L."/>
            <person name="Kyrpides N."/>
            <person name="Mikhailova N."/>
            <person name="Zhao F."/>
            <person name="Li T."/>
            <person name="Liu Z."/>
            <person name="Overmann J."/>
            <person name="Bryant D.A."/>
            <person name="Richardson P."/>
        </authorList>
    </citation>
    <scope>NUCLEOTIDE SEQUENCE [LARGE SCALE GENOMIC DNA]</scope>
    <source>
        <strain>DSM 263 / NCIMB 8327</strain>
    </source>
</reference>
<evidence type="ECO:0000255" key="1">
    <source>
        <dbReference type="HAMAP-Rule" id="MF_00185"/>
    </source>
</evidence>
<sequence>MSQKPVLVILGPTASGKTELAFRIARKTGGEIISADSRQIYRSMDIGTAKPPKWMLNEVKHHFIDEKEIGEPFSAGDFAEQAAERIRELRQRGITPIVAGGSTLYLEGLLKGFAELPQSNPEIRARLKHELELHGAEALYRRLEAFDPEQAKTLDPTKTQRLIRSLEIIEISGTTVTALQRKTSGPPPGIEFTVIALDLPREVLYERINRRTSEMMHAGLEAETRHLFDKFRDEWRSKKLNALATVGYRELFEHFEGLYNLETAEALIAQHTRNYAKRQLTFFRNRLDVEWVKGPLDEAGIEALVESLCEKIA</sequence>
<organism>
    <name type="scientific">Chlorobaculum parvum (strain DSM 263 / NCIMB 8327)</name>
    <name type="common">Chlorobium vibrioforme subsp. thiosulfatophilum</name>
    <dbReference type="NCBI Taxonomy" id="517417"/>
    <lineage>
        <taxon>Bacteria</taxon>
        <taxon>Pseudomonadati</taxon>
        <taxon>Chlorobiota</taxon>
        <taxon>Chlorobiia</taxon>
        <taxon>Chlorobiales</taxon>
        <taxon>Chlorobiaceae</taxon>
        <taxon>Chlorobaculum</taxon>
    </lineage>
</organism>
<proteinExistence type="inferred from homology"/>
<feature type="chain" id="PRO_1000098651" description="tRNA dimethylallyltransferase">
    <location>
        <begin position="1"/>
        <end position="313"/>
    </location>
</feature>
<feature type="region of interest" description="Interaction with substrate tRNA" evidence="1">
    <location>
        <begin position="36"/>
        <end position="39"/>
    </location>
</feature>
<feature type="region of interest" description="Interaction with substrate tRNA" evidence="1">
    <location>
        <begin position="160"/>
        <end position="164"/>
    </location>
</feature>
<feature type="binding site" evidence="1">
    <location>
        <begin position="11"/>
        <end position="18"/>
    </location>
    <ligand>
        <name>ATP</name>
        <dbReference type="ChEBI" id="CHEBI:30616"/>
    </ligand>
</feature>
<feature type="binding site" evidence="1">
    <location>
        <begin position="13"/>
        <end position="18"/>
    </location>
    <ligand>
        <name>substrate</name>
    </ligand>
</feature>
<feature type="site" description="Interaction with substrate tRNA" evidence="1">
    <location>
        <position position="102"/>
    </location>
</feature>
<feature type="site" description="Interaction with substrate tRNA" evidence="1">
    <location>
        <position position="124"/>
    </location>
</feature>
<dbReference type="EC" id="2.5.1.75" evidence="1"/>
<dbReference type="EMBL" id="CP001099">
    <property type="protein sequence ID" value="ACF11643.1"/>
    <property type="molecule type" value="Genomic_DNA"/>
</dbReference>
<dbReference type="RefSeq" id="WP_012502476.1">
    <property type="nucleotide sequence ID" value="NC_011027.1"/>
</dbReference>
<dbReference type="SMR" id="B3QNZ0"/>
<dbReference type="STRING" id="517417.Cpar_1238"/>
<dbReference type="KEGG" id="cpc:Cpar_1238"/>
<dbReference type="eggNOG" id="COG0324">
    <property type="taxonomic scope" value="Bacteria"/>
</dbReference>
<dbReference type="HOGENOM" id="CLU_032616_0_1_10"/>
<dbReference type="OrthoDB" id="9776390at2"/>
<dbReference type="Proteomes" id="UP000008811">
    <property type="component" value="Chromosome"/>
</dbReference>
<dbReference type="GO" id="GO:0005524">
    <property type="term" value="F:ATP binding"/>
    <property type="evidence" value="ECO:0007669"/>
    <property type="project" value="UniProtKB-UniRule"/>
</dbReference>
<dbReference type="GO" id="GO:0052381">
    <property type="term" value="F:tRNA dimethylallyltransferase activity"/>
    <property type="evidence" value="ECO:0007669"/>
    <property type="project" value="UniProtKB-UniRule"/>
</dbReference>
<dbReference type="GO" id="GO:0006400">
    <property type="term" value="P:tRNA modification"/>
    <property type="evidence" value="ECO:0007669"/>
    <property type="project" value="TreeGrafter"/>
</dbReference>
<dbReference type="Gene3D" id="1.10.20.140">
    <property type="match status" value="1"/>
</dbReference>
<dbReference type="Gene3D" id="3.40.50.300">
    <property type="entry name" value="P-loop containing nucleotide triphosphate hydrolases"/>
    <property type="match status" value="1"/>
</dbReference>
<dbReference type="HAMAP" id="MF_00185">
    <property type="entry name" value="IPP_trans"/>
    <property type="match status" value="1"/>
</dbReference>
<dbReference type="InterPro" id="IPR039657">
    <property type="entry name" value="Dimethylallyltransferase"/>
</dbReference>
<dbReference type="InterPro" id="IPR018022">
    <property type="entry name" value="IPT"/>
</dbReference>
<dbReference type="InterPro" id="IPR027417">
    <property type="entry name" value="P-loop_NTPase"/>
</dbReference>
<dbReference type="NCBIfam" id="TIGR00174">
    <property type="entry name" value="miaA"/>
    <property type="match status" value="1"/>
</dbReference>
<dbReference type="PANTHER" id="PTHR11088">
    <property type="entry name" value="TRNA DIMETHYLALLYLTRANSFERASE"/>
    <property type="match status" value="1"/>
</dbReference>
<dbReference type="PANTHER" id="PTHR11088:SF60">
    <property type="entry name" value="TRNA DIMETHYLALLYLTRANSFERASE"/>
    <property type="match status" value="1"/>
</dbReference>
<dbReference type="Pfam" id="PF01715">
    <property type="entry name" value="IPPT"/>
    <property type="match status" value="1"/>
</dbReference>
<dbReference type="SUPFAM" id="SSF52540">
    <property type="entry name" value="P-loop containing nucleoside triphosphate hydrolases"/>
    <property type="match status" value="2"/>
</dbReference>
<comment type="function">
    <text evidence="1">Catalyzes the transfer of a dimethylallyl group onto the adenine at position 37 in tRNAs that read codons beginning with uridine, leading to the formation of N6-(dimethylallyl)adenosine (i(6)A).</text>
</comment>
<comment type="catalytic activity">
    <reaction evidence="1">
        <text>adenosine(37) in tRNA + dimethylallyl diphosphate = N(6)-dimethylallyladenosine(37) in tRNA + diphosphate</text>
        <dbReference type="Rhea" id="RHEA:26482"/>
        <dbReference type="Rhea" id="RHEA-COMP:10162"/>
        <dbReference type="Rhea" id="RHEA-COMP:10375"/>
        <dbReference type="ChEBI" id="CHEBI:33019"/>
        <dbReference type="ChEBI" id="CHEBI:57623"/>
        <dbReference type="ChEBI" id="CHEBI:74411"/>
        <dbReference type="ChEBI" id="CHEBI:74415"/>
        <dbReference type="EC" id="2.5.1.75"/>
    </reaction>
</comment>
<comment type="cofactor">
    <cofactor evidence="1">
        <name>Mg(2+)</name>
        <dbReference type="ChEBI" id="CHEBI:18420"/>
    </cofactor>
</comment>
<comment type="subunit">
    <text evidence="1">Monomer.</text>
</comment>
<comment type="similarity">
    <text evidence="1">Belongs to the IPP transferase family.</text>
</comment>